<evidence type="ECO:0000255" key="1">
    <source>
        <dbReference type="HAMAP-Rule" id="MF_01114"/>
    </source>
</evidence>
<accession>Q47RS5</accession>
<proteinExistence type="inferred from homology"/>
<organism>
    <name type="scientific">Thermobifida fusca (strain YX)</name>
    <dbReference type="NCBI Taxonomy" id="269800"/>
    <lineage>
        <taxon>Bacteria</taxon>
        <taxon>Bacillati</taxon>
        <taxon>Actinomycetota</taxon>
        <taxon>Actinomycetes</taxon>
        <taxon>Streptosporangiales</taxon>
        <taxon>Nocardiopsidaceae</taxon>
        <taxon>Thermobifida</taxon>
    </lineage>
</organism>
<dbReference type="EMBL" id="CP000088">
    <property type="protein sequence ID" value="AAZ54842.1"/>
    <property type="molecule type" value="Genomic_DNA"/>
</dbReference>
<dbReference type="RefSeq" id="WP_011291251.1">
    <property type="nucleotide sequence ID" value="NC_007333.1"/>
</dbReference>
<dbReference type="SMR" id="Q47RS5"/>
<dbReference type="STRING" id="269800.Tfu_0804"/>
<dbReference type="KEGG" id="tfu:Tfu_0804"/>
<dbReference type="eggNOG" id="COG2137">
    <property type="taxonomic scope" value="Bacteria"/>
</dbReference>
<dbReference type="HOGENOM" id="CLU_066607_0_0_11"/>
<dbReference type="OrthoDB" id="5244465at2"/>
<dbReference type="GO" id="GO:0005737">
    <property type="term" value="C:cytoplasm"/>
    <property type="evidence" value="ECO:0007669"/>
    <property type="project" value="UniProtKB-SubCell"/>
</dbReference>
<dbReference type="GO" id="GO:0006282">
    <property type="term" value="P:regulation of DNA repair"/>
    <property type="evidence" value="ECO:0007669"/>
    <property type="project" value="UniProtKB-UniRule"/>
</dbReference>
<dbReference type="Gene3D" id="1.10.10.10">
    <property type="entry name" value="Winged helix-like DNA-binding domain superfamily/Winged helix DNA-binding domain"/>
    <property type="match status" value="2"/>
</dbReference>
<dbReference type="HAMAP" id="MF_01114">
    <property type="entry name" value="RecX"/>
    <property type="match status" value="1"/>
</dbReference>
<dbReference type="InterPro" id="IPR053926">
    <property type="entry name" value="RecX_HTH_1st"/>
</dbReference>
<dbReference type="InterPro" id="IPR053924">
    <property type="entry name" value="RecX_HTH_2nd"/>
</dbReference>
<dbReference type="InterPro" id="IPR053925">
    <property type="entry name" value="RecX_HTH_3rd"/>
</dbReference>
<dbReference type="InterPro" id="IPR003783">
    <property type="entry name" value="Regulatory_RecX"/>
</dbReference>
<dbReference type="InterPro" id="IPR036388">
    <property type="entry name" value="WH-like_DNA-bd_sf"/>
</dbReference>
<dbReference type="NCBIfam" id="NF001061">
    <property type="entry name" value="PRK00117.5-1"/>
    <property type="match status" value="1"/>
</dbReference>
<dbReference type="PANTHER" id="PTHR33602">
    <property type="entry name" value="REGULATORY PROTEIN RECX FAMILY PROTEIN"/>
    <property type="match status" value="1"/>
</dbReference>
<dbReference type="PANTHER" id="PTHR33602:SF1">
    <property type="entry name" value="REGULATORY PROTEIN RECX FAMILY PROTEIN"/>
    <property type="match status" value="1"/>
</dbReference>
<dbReference type="Pfam" id="PF21982">
    <property type="entry name" value="RecX_HTH1"/>
    <property type="match status" value="1"/>
</dbReference>
<dbReference type="Pfam" id="PF02631">
    <property type="entry name" value="RecX_HTH2"/>
    <property type="match status" value="1"/>
</dbReference>
<dbReference type="Pfam" id="PF21981">
    <property type="entry name" value="RecX_HTH3"/>
    <property type="match status" value="1"/>
</dbReference>
<sequence>MPDRAADGRDGPPGGSAAPEDLYARARAICLRLLTRAPRTRAQLTDALRRREIPDEVIEAVLDRFGEVGIVDDAVFAEAWVDSRHAGRGLARRALAAELRQRGVDEDTVRAAVDGLSPAQEEATARQLVRRRLAATRGKPTEVRVRRLMGMLARRGYSAGLAYRLVREELEAEGVEVDFPSPEEG</sequence>
<comment type="function">
    <text evidence="1">Modulates RecA activity.</text>
</comment>
<comment type="subcellular location">
    <subcellularLocation>
        <location evidence="1">Cytoplasm</location>
    </subcellularLocation>
</comment>
<comment type="similarity">
    <text evidence="1">Belongs to the RecX family.</text>
</comment>
<feature type="chain" id="PRO_1000065226" description="Regulatory protein RecX">
    <location>
        <begin position="1"/>
        <end position="185"/>
    </location>
</feature>
<gene>
    <name evidence="1" type="primary">recX</name>
    <name type="ordered locus">Tfu_0804</name>
</gene>
<name>RECX_THEFY</name>
<protein>
    <recommendedName>
        <fullName evidence="1">Regulatory protein RecX</fullName>
    </recommendedName>
</protein>
<reference key="1">
    <citation type="journal article" date="2007" name="J. Bacteriol.">
        <title>Genome sequence and analysis of the soil cellulolytic actinomycete Thermobifida fusca YX.</title>
        <authorList>
            <person name="Lykidis A."/>
            <person name="Mavromatis K."/>
            <person name="Ivanova N."/>
            <person name="Anderson I."/>
            <person name="Land M."/>
            <person name="DiBartolo G."/>
            <person name="Martinez M."/>
            <person name="Lapidus A."/>
            <person name="Lucas S."/>
            <person name="Copeland A."/>
            <person name="Richardson P."/>
            <person name="Wilson D.B."/>
            <person name="Kyrpides N."/>
        </authorList>
    </citation>
    <scope>NUCLEOTIDE SEQUENCE [LARGE SCALE GENOMIC DNA]</scope>
    <source>
        <strain>YX</strain>
    </source>
</reference>
<keyword id="KW-0963">Cytoplasm</keyword>